<sequence length="445" mass="45940">MRPNRFSLRRSPTAVAAVALAAVLAAGAPAAQAAGAAAPTAAAAAAPDIPLANVKAHLTQLSTIAANNGGNRAHGRPGYKASVDYVKAKLDAAGYTTTLQQFTSGGATGYNLIADWPGGDPNKVLMAGAHLDSVSSGAGINDNGSGSAAVLETALAVSRAGYQPDKHLRFAWWGAEELGLIGSKYYVNNLPSADRSKLAGYLNFDMIGSPNPGYFVYDDDPVIEKTFKDYFAGLNVPTEIETEGDGRSDHAPFKNVGVPVGGLFTGAGYTKSAAQAQKWGGTAGQAFDRCYHSSCDSLSNINDTALDRNSDAAAHAIWTLSSGTGEPPTGEGVFSNTTDVAIPDAGAAVTSSVAVTGRTGNAPAALQVGVDIKHTYRGDLVVDLLAPDGTAYRLKNSSSGDSADNVIATYTVNASSEVANGSWKLRVQDIARQDTGYIDSWKLTF</sequence>
<comment type="function">
    <text evidence="5 6 7">An exopeptidase specific for larger hydrophobic amino acids (especially leucine), no cleavage occurs if the next residue is proline (PubMed:8444149).</text>
</comment>
<comment type="catalytic activity">
    <reaction evidence="6">
        <text>Release of an N-terminal amino acid with a preference for large hydrophobic amino-terminus residues.</text>
        <dbReference type="EC" id="3.4.11.24"/>
    </reaction>
</comment>
<comment type="cofactor">
    <cofactor evidence="3 8">
        <name>Ca(2+)</name>
        <dbReference type="ChEBI" id="CHEBI:29108"/>
    </cofactor>
    <text evidence="3 8">Binds 1 Ca(2+) per subunit.</text>
</comment>
<comment type="cofactor">
    <cofactor evidence="3 6 8">
        <name>Zn(2+)</name>
        <dbReference type="ChEBI" id="CHEBI:29105"/>
    </cofactor>
    <cofactor evidence="6">
        <name>Mn(2+)</name>
        <dbReference type="ChEBI" id="CHEBI:29035"/>
    </cofactor>
    <cofactor evidence="6">
        <name>Co(2+)</name>
        <dbReference type="ChEBI" id="CHEBI:48828"/>
    </cofactor>
    <text evidence="3 6 8">Binds 2 Zn(2+) ions per subunit. Can be replaced by Mn(2+) or Co(2+) which results in altered specificities (PubMed:8444149).</text>
</comment>
<comment type="activity regulation">
    <text evidence="3 4 5 6">Calcium activates the enzyme, inhibited by 1,10-phenanthroline, EDTA and EGTA (PubMed:2503378). End-product inhibited by L-amino acids (PubMed:15388919). Non-competitively inhibited by NaF and NaH(2)PO(4) (PubMed:17608735).</text>
</comment>
<comment type="biophysicochemical properties">
    <kinetics>
        <KM evidence="6">0.59 mM for Leu-NH-Np (with zinc as cofactor)</KM>
        <KM evidence="6">0.13 mM for Leu-NH-Np (with manganese as cofactor)</KM>
        <KM evidence="6">0.046 mM for Leu-NH-Np (with cobalt as cofactor)</KM>
        <KM evidence="6">4.1 mM for Ala-NH-Np (with zinc as cofactor)</KM>
        <KM evidence="6">1.74 mM for Ala-NH-Np (with cobalt as cofactor)</KM>
        <KM evidence="2">0.57 mM for Leu-pNA (with zinc as cofactor)</KM>
        <text evidence="2">kcat is 390 sec(-1) with Leu-pNA.</text>
    </kinetics>
    <temperatureDependence>
        <text evidence="5">Stable after heating at 69 degrees Celsius for 5 hours.</text>
    </temperatureDependence>
</comment>
<comment type="subunit">
    <text evidence="5 8">Monomer.</text>
</comment>
<comment type="subcellular location">
    <subcellularLocation>
        <location evidence="5 7">Secreted</location>
    </subcellularLocation>
</comment>
<comment type="mass spectrometry" mass="29728.0" error="1.0" method="Electrospray" evidence="7"/>
<comment type="biotechnology">
    <text evidence="14 15 16">Sold by several companies as an extracellular extract called Pronase.</text>
</comment>
<comment type="miscellaneous">
    <text evidence="13">Most experiments use protein purified from a commercial source rather than protein that has been overexpressed.</text>
</comment>
<comment type="similarity">
    <text evidence="13">Belongs to the peptidase M28 family. M28A subfamily.</text>
</comment>
<keyword id="KW-0002">3D-structure</keyword>
<keyword id="KW-0031">Aminopeptidase</keyword>
<keyword id="KW-0106">Calcium</keyword>
<keyword id="KW-0903">Direct protein sequencing</keyword>
<keyword id="KW-1015">Disulfide bond</keyword>
<keyword id="KW-0378">Hydrolase</keyword>
<keyword id="KW-0479">Metal-binding</keyword>
<keyword id="KW-0645">Protease</keyword>
<keyword id="KW-0964">Secreted</keyword>
<keyword id="KW-0732">Signal</keyword>
<keyword id="KW-0862">Zinc</keyword>
<keyword id="KW-0865">Zymogen</keyword>
<protein>
    <recommendedName>
        <fullName>Aminopeptidase S</fullName>
        <ecNumber>3.4.11.24</ecNumber>
    </recommendedName>
    <alternativeName>
        <fullName evidence="11">API</fullName>
    </alternativeName>
    <alternativeName>
        <fullName evidence="12">SGAP</fullName>
    </alternativeName>
</protein>
<feature type="signal peptide" evidence="5 7">
    <location>
        <begin position="1"/>
        <end position="45"/>
    </location>
</feature>
<feature type="chain" id="PRO_0000174143" description="Aminopeptidase S">
    <location>
        <begin position="46"/>
        <end position="329"/>
    </location>
</feature>
<feature type="propeptide" id="PRO_0000431389" description="Removed in mature form" evidence="7">
    <location>
        <begin position="330"/>
        <end position="445"/>
    </location>
</feature>
<feature type="domain" description="P/Homo B" evidence="1">
    <location>
        <begin position="325"/>
        <end position="445"/>
    </location>
</feature>
<feature type="active site" description="Proton acceptor" evidence="9 10">
    <location>
        <position position="176"/>
    </location>
</feature>
<feature type="binding site" evidence="3 8">
    <location>
        <position position="48"/>
    </location>
    <ligand>
        <name>Ca(2+)</name>
        <dbReference type="ChEBI" id="CHEBI:29108"/>
    </ligand>
</feature>
<feature type="binding site" evidence="3 8">
    <location>
        <position position="49"/>
    </location>
    <ligand>
        <name>Ca(2+)</name>
        <dbReference type="ChEBI" id="CHEBI:29108"/>
    </ligand>
</feature>
<feature type="binding site" evidence="3 8">
    <location>
        <position position="130"/>
    </location>
    <ligand>
        <name>Zn(2+)</name>
        <dbReference type="ChEBI" id="CHEBI:29105"/>
        <label>1</label>
        <note>catalytic</note>
    </ligand>
</feature>
<feature type="binding site" evidence="3 8">
    <location>
        <position position="142"/>
    </location>
    <ligand>
        <name>Zn(2+)</name>
        <dbReference type="ChEBI" id="CHEBI:29105"/>
        <label>1</label>
        <note>catalytic</note>
    </ligand>
</feature>
<feature type="binding site" evidence="3 8">
    <location>
        <position position="142"/>
    </location>
    <ligand>
        <name>Zn(2+)</name>
        <dbReference type="ChEBI" id="CHEBI:29105"/>
        <label>2</label>
        <note>catalytic</note>
    </ligand>
</feature>
<feature type="binding site" evidence="3 8">
    <location>
        <position position="177"/>
    </location>
    <ligand>
        <name>Zn(2+)</name>
        <dbReference type="ChEBI" id="CHEBI:29105"/>
        <label>2</label>
        <note>catalytic</note>
    </ligand>
</feature>
<feature type="binding site" evidence="3 8">
    <location>
        <position position="205"/>
    </location>
    <ligand>
        <name>Zn(2+)</name>
        <dbReference type="ChEBI" id="CHEBI:29105"/>
        <label>1</label>
        <note>catalytic</note>
    </ligand>
</feature>
<feature type="binding site" evidence="3 8">
    <location>
        <position position="292"/>
    </location>
    <ligand>
        <name>Zn(2+)</name>
        <dbReference type="ChEBI" id="CHEBI:29105"/>
        <label>2</label>
        <note>catalytic</note>
    </ligand>
</feature>
<feature type="binding site" evidence="3 8">
    <location>
        <position position="307"/>
    </location>
    <ligand>
        <name>Ca(2+)</name>
        <dbReference type="ChEBI" id="CHEBI:29108"/>
    </ligand>
</feature>
<feature type="binding site" evidence="3 8">
    <location>
        <position position="311"/>
    </location>
    <ligand>
        <name>Ca(2+)</name>
        <dbReference type="ChEBI" id="CHEBI:29108"/>
    </ligand>
</feature>
<feature type="site" description="Transition state stabilizer" evidence="9 10">
    <location>
        <position position="291"/>
    </location>
</feature>
<feature type="disulfide bond" evidence="3 8">
    <location>
        <begin position="290"/>
        <end position="295"/>
    </location>
</feature>
<feature type="mutagenesis site" description="KM halves (0.33 mM), kcat reduces by 5 orders of magnitude." evidence="2">
    <original>E</original>
    <variation>A</variation>
    <location>
        <position position="176"/>
    </location>
</feature>
<feature type="mutagenesis site" description="KM decreases (to 0.4 mM), kcat reduces by 4 orders of magnitude." evidence="2">
    <original>E</original>
    <variation>D</variation>
    <variation>Q</variation>
    <location>
        <position position="176"/>
    </location>
</feature>
<feature type="mutagenesis site" description="Activity decreases about 100-fold." evidence="2">
    <original>Y</original>
    <variation>A</variation>
    <variation>F</variation>
    <variation>S</variation>
    <location>
        <position position="291"/>
    </location>
</feature>
<feature type="sequence conflict" description="In Ref. 2; AA sequence." ref="2">
    <original>Y</original>
    <variation>F</variation>
    <location>
        <position position="185"/>
    </location>
</feature>
<feature type="sequence conflict" description="In Ref. 5; no nucleotide entry." ref="5">
    <original>Q</original>
    <variation>R</variation>
    <location>
        <position position="285"/>
    </location>
</feature>
<feature type="helix" evidence="18">
    <location>
        <begin position="51"/>
        <end position="66"/>
    </location>
</feature>
<feature type="turn" evidence="18">
    <location>
        <begin position="67"/>
        <end position="70"/>
    </location>
</feature>
<feature type="helix" evidence="18">
    <location>
        <begin position="77"/>
        <end position="93"/>
    </location>
</feature>
<feature type="strand" evidence="18">
    <location>
        <begin position="96"/>
        <end position="104"/>
    </location>
</feature>
<feature type="strand" evidence="18">
    <location>
        <begin position="107"/>
        <end position="115"/>
    </location>
</feature>
<feature type="strand" evidence="18">
    <location>
        <begin position="119"/>
        <end position="130"/>
    </location>
</feature>
<feature type="turn" evidence="18">
    <location>
        <begin position="140"/>
        <end position="143"/>
    </location>
</feature>
<feature type="helix" evidence="18">
    <location>
        <begin position="144"/>
        <end position="159"/>
    </location>
</feature>
<feature type="strand" evidence="18">
    <location>
        <begin position="165"/>
        <end position="174"/>
    </location>
</feature>
<feature type="helix" evidence="18">
    <location>
        <begin position="176"/>
        <end position="178"/>
    </location>
</feature>
<feature type="helix" evidence="18">
    <location>
        <begin position="181"/>
        <end position="189"/>
    </location>
</feature>
<feature type="helix" evidence="18">
    <location>
        <begin position="192"/>
        <end position="195"/>
    </location>
</feature>
<feature type="strand" evidence="18">
    <location>
        <begin position="198"/>
        <end position="204"/>
    </location>
</feature>
<feature type="strand" evidence="17">
    <location>
        <begin position="215"/>
        <end position="217"/>
    </location>
</feature>
<feature type="helix" evidence="18">
    <location>
        <begin position="221"/>
        <end position="233"/>
    </location>
</feature>
<feature type="strand" evidence="17">
    <location>
        <begin position="239"/>
        <end position="241"/>
    </location>
</feature>
<feature type="helix" evidence="18">
    <location>
        <begin position="250"/>
        <end position="255"/>
    </location>
</feature>
<feature type="strand" evidence="18">
    <location>
        <begin position="260"/>
        <end position="264"/>
    </location>
</feature>
<feature type="strand" evidence="18">
    <location>
        <begin position="268"/>
        <end position="270"/>
    </location>
</feature>
<feature type="helix" evidence="18">
    <location>
        <begin position="273"/>
        <end position="279"/>
    </location>
</feature>
<feature type="strand" evidence="18">
    <location>
        <begin position="285"/>
        <end position="287"/>
    </location>
</feature>
<feature type="turn" evidence="18">
    <location>
        <begin position="289"/>
        <end position="292"/>
    </location>
</feature>
<feature type="helix" evidence="18">
    <location>
        <begin position="303"/>
        <end position="321"/>
    </location>
</feature>
<gene>
    <name type="ordered locus">SGR_5809</name>
</gene>
<dbReference type="EC" id="3.4.11.24"/>
<dbReference type="EMBL" id="AP009493">
    <property type="protein sequence ID" value="BAG22638.1"/>
    <property type="molecule type" value="Genomic_DNA"/>
</dbReference>
<dbReference type="PIR" id="S66427">
    <property type="entry name" value="S66427"/>
</dbReference>
<dbReference type="RefSeq" id="WP_012381549.1">
    <property type="nucleotide sequence ID" value="NC_010572.1"/>
</dbReference>
<dbReference type="PDB" id="1CP7">
    <property type="method" value="X-ray"/>
    <property type="resolution" value="1.58 A"/>
    <property type="chains" value="A=46-329"/>
</dbReference>
<dbReference type="PDB" id="1F2O">
    <property type="method" value="X-ray"/>
    <property type="resolution" value="1.70 A"/>
    <property type="chains" value="A=46-329"/>
</dbReference>
<dbReference type="PDB" id="1F2P">
    <property type="method" value="X-ray"/>
    <property type="resolution" value="1.80 A"/>
    <property type="chains" value="A=46-329"/>
</dbReference>
<dbReference type="PDB" id="1QQ9">
    <property type="method" value="X-ray"/>
    <property type="resolution" value="1.53 A"/>
    <property type="chains" value="A=46-329"/>
</dbReference>
<dbReference type="PDB" id="1TF8">
    <property type="method" value="X-ray"/>
    <property type="resolution" value="1.30 A"/>
    <property type="chains" value="A=46-329"/>
</dbReference>
<dbReference type="PDB" id="1TF9">
    <property type="method" value="X-ray"/>
    <property type="resolution" value="1.30 A"/>
    <property type="chains" value="A=46-329"/>
</dbReference>
<dbReference type="PDB" id="1TKF">
    <property type="method" value="X-ray"/>
    <property type="resolution" value="1.20 A"/>
    <property type="chains" value="A=46-329"/>
</dbReference>
<dbReference type="PDB" id="1TKH">
    <property type="method" value="X-ray"/>
    <property type="resolution" value="1.25 A"/>
    <property type="chains" value="A=46-329"/>
</dbReference>
<dbReference type="PDB" id="1TKJ">
    <property type="method" value="X-ray"/>
    <property type="resolution" value="1.15 A"/>
    <property type="chains" value="A=46-329"/>
</dbReference>
<dbReference type="PDB" id="1XBU">
    <property type="method" value="X-ray"/>
    <property type="resolution" value="1.20 A"/>
    <property type="chains" value="A=46-322"/>
</dbReference>
<dbReference type="PDB" id="1XJO">
    <property type="method" value="X-ray"/>
    <property type="resolution" value="1.75 A"/>
    <property type="chains" value="A=46-329"/>
</dbReference>
<dbReference type="PDBsum" id="1CP7"/>
<dbReference type="PDBsum" id="1F2O"/>
<dbReference type="PDBsum" id="1F2P"/>
<dbReference type="PDBsum" id="1QQ9"/>
<dbReference type="PDBsum" id="1TF8"/>
<dbReference type="PDBsum" id="1TF9"/>
<dbReference type="PDBsum" id="1TKF"/>
<dbReference type="PDBsum" id="1TKH"/>
<dbReference type="PDBsum" id="1TKJ"/>
<dbReference type="PDBsum" id="1XBU"/>
<dbReference type="PDBsum" id="1XJO"/>
<dbReference type="SMR" id="P80561"/>
<dbReference type="DrugBank" id="DB04713">
    <property type="generic name" value="4-Iodo-D-phenylalanine"/>
</dbReference>
<dbReference type="DrugBank" id="DB03660">
    <property type="generic name" value="4-Iodo-L-phenylalanine"/>
</dbReference>
<dbReference type="DrugBank" id="DB02467">
    <property type="generic name" value="L-methionine (S)-S-oxide"/>
</dbReference>
<dbReference type="MEROPS" id="M28.003"/>
<dbReference type="KEGG" id="sgr:SGR_5809"/>
<dbReference type="PATRIC" id="fig|455632.4.peg.5952"/>
<dbReference type="eggNOG" id="COG2234">
    <property type="taxonomic scope" value="Bacteria"/>
</dbReference>
<dbReference type="eggNOG" id="COG4935">
    <property type="taxonomic scope" value="Bacteria"/>
</dbReference>
<dbReference type="HOGENOM" id="CLU_024336_2_0_11"/>
<dbReference type="BRENDA" id="3.4.11.24">
    <property type="organism ID" value="6035"/>
</dbReference>
<dbReference type="SABIO-RK" id="P80561"/>
<dbReference type="EvolutionaryTrace" id="P80561"/>
<dbReference type="Proteomes" id="UP000001685">
    <property type="component" value="Chromosome"/>
</dbReference>
<dbReference type="GO" id="GO:0005576">
    <property type="term" value="C:extracellular region"/>
    <property type="evidence" value="ECO:0007669"/>
    <property type="project" value="UniProtKB-SubCell"/>
</dbReference>
<dbReference type="GO" id="GO:0004177">
    <property type="term" value="F:aminopeptidase activity"/>
    <property type="evidence" value="ECO:0007669"/>
    <property type="project" value="UniProtKB-KW"/>
</dbReference>
<dbReference type="GO" id="GO:0046872">
    <property type="term" value="F:metal ion binding"/>
    <property type="evidence" value="ECO:0007669"/>
    <property type="project" value="UniProtKB-KW"/>
</dbReference>
<dbReference type="GO" id="GO:0008235">
    <property type="term" value="F:metalloexopeptidase activity"/>
    <property type="evidence" value="ECO:0007669"/>
    <property type="project" value="InterPro"/>
</dbReference>
<dbReference type="GO" id="GO:0004252">
    <property type="term" value="F:serine-type endopeptidase activity"/>
    <property type="evidence" value="ECO:0007669"/>
    <property type="project" value="InterPro"/>
</dbReference>
<dbReference type="GO" id="GO:0006508">
    <property type="term" value="P:proteolysis"/>
    <property type="evidence" value="ECO:0007669"/>
    <property type="project" value="UniProtKB-KW"/>
</dbReference>
<dbReference type="CDD" id="cd03876">
    <property type="entry name" value="M28_SGAP_like"/>
    <property type="match status" value="1"/>
</dbReference>
<dbReference type="FunFam" id="2.60.120.260:FF:000149">
    <property type="entry name" value="Leupeptin-inactivating enzyme 1"/>
    <property type="match status" value="1"/>
</dbReference>
<dbReference type="FunFam" id="3.40.630.10:FF:000066">
    <property type="entry name" value="M28 family peptidase"/>
    <property type="match status" value="1"/>
</dbReference>
<dbReference type="Gene3D" id="2.60.120.260">
    <property type="entry name" value="Galactose-binding domain-like"/>
    <property type="match status" value="1"/>
</dbReference>
<dbReference type="Gene3D" id="3.40.630.10">
    <property type="entry name" value="Zn peptidases"/>
    <property type="match status" value="1"/>
</dbReference>
<dbReference type="InterPro" id="IPR008979">
    <property type="entry name" value="Galactose-bd-like_sf"/>
</dbReference>
<dbReference type="InterPro" id="IPR045175">
    <property type="entry name" value="M28_fam"/>
</dbReference>
<dbReference type="InterPro" id="IPR041756">
    <property type="entry name" value="M28_SGAP-like"/>
</dbReference>
<dbReference type="InterPro" id="IPR002884">
    <property type="entry name" value="P_dom"/>
</dbReference>
<dbReference type="InterPro" id="IPR007484">
    <property type="entry name" value="Peptidase_M28"/>
</dbReference>
<dbReference type="PANTHER" id="PTHR12147">
    <property type="entry name" value="METALLOPEPTIDASE M28 FAMILY MEMBER"/>
    <property type="match status" value="1"/>
</dbReference>
<dbReference type="PANTHER" id="PTHR12147:SF26">
    <property type="entry name" value="PEPTIDASE M28 DOMAIN-CONTAINING PROTEIN"/>
    <property type="match status" value="1"/>
</dbReference>
<dbReference type="Pfam" id="PF01483">
    <property type="entry name" value="P_proprotein"/>
    <property type="match status" value="1"/>
</dbReference>
<dbReference type="Pfam" id="PF04389">
    <property type="entry name" value="Peptidase_M28"/>
    <property type="match status" value="1"/>
</dbReference>
<dbReference type="SUPFAM" id="SSF49785">
    <property type="entry name" value="Galactose-binding domain-like"/>
    <property type="match status" value="1"/>
</dbReference>
<dbReference type="SUPFAM" id="SSF53187">
    <property type="entry name" value="Zn-dependent exopeptidases"/>
    <property type="match status" value="1"/>
</dbReference>
<dbReference type="PROSITE" id="PS51829">
    <property type="entry name" value="P_HOMO_B"/>
    <property type="match status" value="1"/>
</dbReference>
<organism>
    <name type="scientific">Streptomyces griseus subsp. griseus (strain JCM 4626 / CBS 651.72 / NBRC 13350 / KCC S-0626 / ISP 5235)</name>
    <dbReference type="NCBI Taxonomy" id="455632"/>
    <lineage>
        <taxon>Bacteria</taxon>
        <taxon>Bacillati</taxon>
        <taxon>Actinomycetota</taxon>
        <taxon>Actinomycetes</taxon>
        <taxon>Kitasatosporales</taxon>
        <taxon>Streptomycetaceae</taxon>
        <taxon>Streptomyces</taxon>
    </lineage>
</organism>
<proteinExistence type="evidence at protein level"/>
<accession>P80561</accession>
<accession>B1W291</accession>
<evidence type="ECO:0000255" key="1">
    <source>
        <dbReference type="PROSITE-ProRule" id="PRU01173"/>
    </source>
</evidence>
<evidence type="ECO:0000269" key="2">
    <source>
    </source>
</evidence>
<evidence type="ECO:0000269" key="3">
    <source>
    </source>
</evidence>
<evidence type="ECO:0000269" key="4">
    <source>
    </source>
</evidence>
<evidence type="ECO:0000269" key="5">
    <source>
    </source>
</evidence>
<evidence type="ECO:0000269" key="6">
    <source>
    </source>
</evidence>
<evidence type="ECO:0000269" key="7">
    <source>
    </source>
</evidence>
<evidence type="ECO:0000269" key="8">
    <source>
    </source>
</evidence>
<evidence type="ECO:0000303" key="9">
    <source>
    </source>
</evidence>
<evidence type="ECO:0000303" key="10">
    <source>
    </source>
</evidence>
<evidence type="ECO:0000303" key="11">
    <source>
    </source>
</evidence>
<evidence type="ECO:0000303" key="12">
    <source>
    </source>
</evidence>
<evidence type="ECO:0000305" key="13"/>
<evidence type="ECO:0000305" key="14">
    <source>
    </source>
</evidence>
<evidence type="ECO:0000305" key="15">
    <source>
    </source>
</evidence>
<evidence type="ECO:0000305" key="16">
    <source>
    </source>
</evidence>
<evidence type="ECO:0007829" key="17">
    <source>
        <dbReference type="PDB" id="1TKF"/>
    </source>
</evidence>
<evidence type="ECO:0007829" key="18">
    <source>
        <dbReference type="PDB" id="1TKJ"/>
    </source>
</evidence>
<name>APX_STRGG</name>
<reference key="1">
    <citation type="journal article" date="2008" name="J. Bacteriol.">
        <title>Genome sequence of the streptomycin-producing microorganism Streptomyces griseus IFO 13350.</title>
        <authorList>
            <person name="Ohnishi Y."/>
            <person name="Ishikawa J."/>
            <person name="Hara H."/>
            <person name="Suzuki H."/>
            <person name="Ikenoya M."/>
            <person name="Ikeda H."/>
            <person name="Yamashita A."/>
            <person name="Hattori M."/>
            <person name="Horinouchi S."/>
        </authorList>
    </citation>
    <scope>NUCLEOTIDE SEQUENCE [LARGE SCALE GENOMIC DNA]</scope>
    <source>
        <strain>JCM 4626 / CBS 651.72 / NBRC 13350 / KCC S-0626 / ISP 5235</strain>
    </source>
</reference>
<reference key="2">
    <citation type="journal article" date="1996" name="Eur. J. Biochem.">
        <title>Aminopeptidase from Streptomyces griseus: primary structure and comparison with other zinc-containing aminopeptidases.</title>
        <authorList>
            <person name="Maras B."/>
            <person name="Greenblatt H.M."/>
            <person name="Shoham G."/>
            <person name="Spungin-Bialik A."/>
            <person name="Blumberg S."/>
            <person name="Barra D."/>
        </authorList>
    </citation>
    <scope>PROTEIN SEQUENCE OF 46-329</scope>
    <scope>FUNCTION</scope>
    <scope>MASS SPECTROMETRY</scope>
</reference>
<reference key="3">
    <citation type="journal article" date="1989" name="Eur. J. Biochem.">
        <title>Streptomyces griseus aminopeptidase is a calcium-activated zinc metalloprotein. Purification and properties of the enzyme.</title>
        <authorList>
            <person name="Spungin A."/>
            <person name="Blumberg S."/>
        </authorList>
    </citation>
    <scope>PROTEIN SEQUENCE OF 46-51</scope>
    <scope>FUNCTION</scope>
    <scope>ACTIVITY REGULATION</scope>
    <scope>BIOPHYSICOCHEMICAL PROPERTIES</scope>
    <scope>SUBUNIT</scope>
    <scope>SUBCELLULAR LOCATION</scope>
    <scope>THERMAL STABILITY</scope>
</reference>
<reference key="4">
    <citation type="journal article" date="1993" name="Eur. J. Biochem.">
        <title>Specificity of Streptomyces griseus aminopeptidase and modulation of activity by divalent metal ion binding and substitution.</title>
        <authorList>
            <person name="Ben-Meir D."/>
            <person name="Spungin A."/>
            <person name="Ashkenazi R."/>
            <person name="Blumberg S."/>
        </authorList>
    </citation>
    <scope>CATALYTIC ACTIVITY</scope>
    <scope>SUBSTRATE SPECIFICITY</scope>
    <scope>COFACTOR</scope>
    <scope>ACTIVITY REGULATION</scope>
    <scope>BIOPHYSICOCHEMICAL PROPERTIES</scope>
</reference>
<reference key="5">
    <citation type="journal article" date="2004" name="FEBS Lett.">
        <title>Identification of the catalytic residues in the double-zinc aminopeptidase from Streptomyces griseus.</title>
        <authorList>
            <person name="Fundoiano-Hershcovitz Y."/>
            <person name="Rabinovitch L."/>
            <person name="Langut Y."/>
            <person name="Reiland V."/>
            <person name="Shoham G."/>
            <person name="Shoham Y."/>
        </authorList>
    </citation>
    <scope>SEQUENCE REVISION TO 115 AND 229</scope>
    <scope>FUNCTION</scope>
    <scope>BIOPHYSICOCHEMICAL PROPERTIES</scope>
    <scope>POSSIBLE REACTION MECHANISM</scope>
    <scope>ACTIVE SITE</scope>
    <scope>MUTAGENESIS OF GLU-176 AND TYR-291</scope>
    <scope>EXPRESSION IN E.COLI</scope>
    <source>
        <strain>DSM 40855</strain>
    </source>
</reference>
<reference key="6">
    <citation type="journal article" date="2007" name="FEBS J.">
        <title>Catalytic mechanism of SGAP, a double-zinc aminopeptidase from Streptomyces griseus.</title>
        <authorList>
            <person name="Hershcovitz Y.F."/>
            <person name="Gilboa R."/>
            <person name="Reiland V."/>
            <person name="Shoham G."/>
            <person name="Shoham Y."/>
        </authorList>
    </citation>
    <scope>FUNCTION</scope>
    <scope>ACTIVITY REGULATION</scope>
    <scope>REACTION MECHANISM</scope>
    <scope>ACTIVE SITE</scope>
</reference>
<reference key="7">
    <citation type="journal article" date="1997" name="J. Mol. Biol.">
        <title>Streptomyces griseus aminopeptidase: X-ray crystallographic structure at 1.75-A resolution.</title>
        <authorList>
            <person name="Greenblatt H.M."/>
            <person name="Almog O."/>
            <person name="Maras B."/>
            <person name="Spungin-Bialik A."/>
            <person name="Barra D."/>
            <person name="Blumberg S."/>
            <person name="Shoham G."/>
        </authorList>
    </citation>
    <scope>X-RAY CRYSTALLOGRAPHY (1.75 ANGSTROMS) IN COMPLEX WITH CALCIUM AND ZINC</scope>
    <scope>COFACTOR</scope>
    <scope>SUBUNIT</scope>
    <scope>DISULFIDE BOND</scope>
</reference>
<reference key="8">
    <citation type="journal article" date="2004" name="Acta Crystallogr. D">
        <title>Binding of inhibitory aromatic amino acids to Streptomyces griseus aminopeptidase.</title>
        <authorList>
            <person name="Reiland V."/>
            <person name="Gilboa R."/>
            <person name="Spungin-Bialik A."/>
            <person name="Schomburg D."/>
            <person name="Shoham Y."/>
            <person name="Blumberg S."/>
            <person name="Shoham G."/>
        </authorList>
    </citation>
    <scope>X-RAY CRYSTALLOGRAPHY (1.30 ANGSTROMS) IN COMPLEX WITH CALCIUM AND ZINC AND INHIBITORS</scope>
    <scope>COFACTOR</scope>
    <scope>ACTIVITY REGULATION</scope>
    <scope>SUBUNIT</scope>
    <scope>DISULFIDE BOND</scope>
</reference>